<dbReference type="EMBL" id="M38249">
    <property type="protein sequence ID" value="AAA28060.1"/>
    <property type="molecule type" value="Genomic_DNA"/>
</dbReference>
<dbReference type="EMBL" id="AY008124">
    <property type="protein sequence ID" value="AAG32077.1"/>
    <property type="molecule type" value="mRNA"/>
</dbReference>
<dbReference type="EMBL" id="Z75549">
    <property type="protein sequence ID" value="CAA99914.1"/>
    <property type="molecule type" value="Genomic_DNA"/>
</dbReference>
<dbReference type="PIR" id="T24992">
    <property type="entry name" value="T24992"/>
</dbReference>
<dbReference type="RefSeq" id="NP_505840.1">
    <property type="nucleotide sequence ID" value="NM_073439.3"/>
</dbReference>
<dbReference type="SMR" id="P28051"/>
<dbReference type="BioGRID" id="44573">
    <property type="interactions" value="1"/>
</dbReference>
<dbReference type="FunCoup" id="P28051">
    <property type="interactions" value="74"/>
</dbReference>
<dbReference type="STRING" id="6239.T19C4.6a.1"/>
<dbReference type="PaxDb" id="6239-T19C4.6a"/>
<dbReference type="PeptideAtlas" id="P28051"/>
<dbReference type="EnsemblMetazoa" id="T19C4.6a.1">
    <property type="protein sequence ID" value="T19C4.6a.1"/>
    <property type="gene ID" value="WBGene00001663"/>
</dbReference>
<dbReference type="GeneID" id="179546"/>
<dbReference type="KEGG" id="cel:CELE_T19C4.6"/>
<dbReference type="UCSC" id="T19C4.6a">
    <property type="organism name" value="c. elegans"/>
</dbReference>
<dbReference type="AGR" id="WB:WBGene00001663"/>
<dbReference type="CTD" id="179546"/>
<dbReference type="WormBase" id="T19C4.6a">
    <property type="protein sequence ID" value="CE06470"/>
    <property type="gene ID" value="WBGene00001663"/>
    <property type="gene designation" value="gpa-1"/>
</dbReference>
<dbReference type="eggNOG" id="KOG0082">
    <property type="taxonomic scope" value="Eukaryota"/>
</dbReference>
<dbReference type="GeneTree" id="ENSGT00940000168787"/>
<dbReference type="HOGENOM" id="CLU_014184_6_0_1"/>
<dbReference type="InParanoid" id="P28051"/>
<dbReference type="OMA" id="HDSAKYF"/>
<dbReference type="OrthoDB" id="5817230at2759"/>
<dbReference type="PhylomeDB" id="P28051"/>
<dbReference type="PRO" id="PR:P28051"/>
<dbReference type="Proteomes" id="UP000001940">
    <property type="component" value="Chromosome V"/>
</dbReference>
<dbReference type="ExpressionAtlas" id="P28051">
    <property type="expression patterns" value="baseline and differential"/>
</dbReference>
<dbReference type="GO" id="GO:0005737">
    <property type="term" value="C:cytoplasm"/>
    <property type="evidence" value="ECO:0000318"/>
    <property type="project" value="GO_Central"/>
</dbReference>
<dbReference type="GO" id="GO:0005834">
    <property type="term" value="C:heterotrimeric G-protein complex"/>
    <property type="evidence" value="ECO:0000318"/>
    <property type="project" value="GO_Central"/>
</dbReference>
<dbReference type="GO" id="GO:0001664">
    <property type="term" value="F:G protein-coupled receptor binding"/>
    <property type="evidence" value="ECO:0000318"/>
    <property type="project" value="GO_Central"/>
</dbReference>
<dbReference type="GO" id="GO:0031683">
    <property type="term" value="F:G-protein beta/gamma-subunit complex binding"/>
    <property type="evidence" value="ECO:0000318"/>
    <property type="project" value="GO_Central"/>
</dbReference>
<dbReference type="GO" id="GO:0005525">
    <property type="term" value="F:GTP binding"/>
    <property type="evidence" value="ECO:0007669"/>
    <property type="project" value="UniProtKB-KW"/>
</dbReference>
<dbReference type="GO" id="GO:0003924">
    <property type="term" value="F:GTPase activity"/>
    <property type="evidence" value="ECO:0000318"/>
    <property type="project" value="GO_Central"/>
</dbReference>
<dbReference type="GO" id="GO:0046872">
    <property type="term" value="F:metal ion binding"/>
    <property type="evidence" value="ECO:0007669"/>
    <property type="project" value="UniProtKB-KW"/>
</dbReference>
<dbReference type="GO" id="GO:0007188">
    <property type="term" value="P:adenylate cyclase-modulating G protein-coupled receptor signaling pathway"/>
    <property type="evidence" value="ECO:0000318"/>
    <property type="project" value="GO_Central"/>
</dbReference>
<dbReference type="CDD" id="cd00066">
    <property type="entry name" value="G-alpha"/>
    <property type="match status" value="1"/>
</dbReference>
<dbReference type="FunFam" id="1.10.400.10:FF:000011">
    <property type="entry name" value="Guanine nucleotide-binding protein alpha-1 subunit"/>
    <property type="match status" value="1"/>
</dbReference>
<dbReference type="FunFam" id="3.40.50.300:FF:002307">
    <property type="entry name" value="Guanine nucleotide-binding protein G(k) subunit alpha"/>
    <property type="match status" value="1"/>
</dbReference>
<dbReference type="FunFam" id="3.40.50.300:FF:000692">
    <property type="entry name" value="Guanine nucleotide-binding protein subunit alpha"/>
    <property type="match status" value="1"/>
</dbReference>
<dbReference type="Gene3D" id="1.10.400.10">
    <property type="entry name" value="GI Alpha 1, domain 2-like"/>
    <property type="match status" value="1"/>
</dbReference>
<dbReference type="Gene3D" id="3.40.50.300">
    <property type="entry name" value="P-loop containing nucleotide triphosphate hydrolases"/>
    <property type="match status" value="1"/>
</dbReference>
<dbReference type="InterPro" id="IPR001019">
    <property type="entry name" value="Gprotein_alpha_su"/>
</dbReference>
<dbReference type="InterPro" id="IPR011025">
    <property type="entry name" value="GproteinA_insert"/>
</dbReference>
<dbReference type="InterPro" id="IPR027417">
    <property type="entry name" value="P-loop_NTPase"/>
</dbReference>
<dbReference type="PANTHER" id="PTHR10218">
    <property type="entry name" value="GTP-BINDING PROTEIN ALPHA SUBUNIT"/>
    <property type="match status" value="1"/>
</dbReference>
<dbReference type="PANTHER" id="PTHR10218:SF232">
    <property type="entry name" value="GUANINE NUCLEOTIDE-BINDING PROTEIN ALPHA-1 SUBUNIT"/>
    <property type="match status" value="1"/>
</dbReference>
<dbReference type="Pfam" id="PF00503">
    <property type="entry name" value="G-alpha"/>
    <property type="match status" value="1"/>
</dbReference>
<dbReference type="PRINTS" id="PR00318">
    <property type="entry name" value="GPROTEINA"/>
</dbReference>
<dbReference type="SMART" id="SM00275">
    <property type="entry name" value="G_alpha"/>
    <property type="match status" value="1"/>
</dbReference>
<dbReference type="SUPFAM" id="SSF52540">
    <property type="entry name" value="P-loop containing nucleoside triphosphate hydrolases"/>
    <property type="match status" value="1"/>
</dbReference>
<dbReference type="SUPFAM" id="SSF47895">
    <property type="entry name" value="Transducin (alpha subunit), insertion domain"/>
    <property type="match status" value="1"/>
</dbReference>
<dbReference type="PROSITE" id="PS51882">
    <property type="entry name" value="G_ALPHA"/>
    <property type="match status" value="1"/>
</dbReference>
<organism>
    <name type="scientific">Caenorhabditis elegans</name>
    <dbReference type="NCBI Taxonomy" id="6239"/>
    <lineage>
        <taxon>Eukaryota</taxon>
        <taxon>Metazoa</taxon>
        <taxon>Ecdysozoa</taxon>
        <taxon>Nematoda</taxon>
        <taxon>Chromadorea</taxon>
        <taxon>Rhabditida</taxon>
        <taxon>Rhabditina</taxon>
        <taxon>Rhabditomorpha</taxon>
        <taxon>Rhabditoidea</taxon>
        <taxon>Rhabditidae</taxon>
        <taxon>Peloderinae</taxon>
        <taxon>Caenorhabditis</taxon>
    </lineage>
</organism>
<feature type="initiator methionine" description="Removed" evidence="2">
    <location>
        <position position="1"/>
    </location>
</feature>
<feature type="chain" id="PRO_0000203629" description="Guanine nucleotide-binding protein alpha-1 subunit">
    <location>
        <begin position="2"/>
        <end position="357"/>
    </location>
</feature>
<feature type="domain" description="G-alpha" evidence="3">
    <location>
        <begin position="32"/>
        <end position="357"/>
    </location>
</feature>
<feature type="region of interest" description="G1 motif" evidence="3">
    <location>
        <begin position="35"/>
        <end position="48"/>
    </location>
</feature>
<feature type="region of interest" description="G2 motif" evidence="3">
    <location>
        <begin position="174"/>
        <end position="182"/>
    </location>
</feature>
<feature type="region of interest" description="G3 motif" evidence="3">
    <location>
        <begin position="197"/>
        <end position="206"/>
    </location>
</feature>
<feature type="region of interest" description="G4 motif" evidence="3">
    <location>
        <begin position="266"/>
        <end position="273"/>
    </location>
</feature>
<feature type="region of interest" description="G5 motif" evidence="3">
    <location>
        <begin position="327"/>
        <end position="332"/>
    </location>
</feature>
<feature type="binding site" evidence="1">
    <location>
        <position position="43"/>
    </location>
    <ligand>
        <name>GTP</name>
        <dbReference type="ChEBI" id="CHEBI:37565"/>
    </ligand>
</feature>
<feature type="binding site" evidence="1">
    <location>
        <position position="44"/>
    </location>
    <ligand>
        <name>GTP</name>
        <dbReference type="ChEBI" id="CHEBI:37565"/>
    </ligand>
</feature>
<feature type="binding site" evidence="1">
    <location>
        <position position="45"/>
    </location>
    <ligand>
        <name>GTP</name>
        <dbReference type="ChEBI" id="CHEBI:37565"/>
    </ligand>
</feature>
<feature type="binding site" evidence="1">
    <location>
        <position position="46"/>
    </location>
    <ligand>
        <name>GTP</name>
        <dbReference type="ChEBI" id="CHEBI:37565"/>
    </ligand>
</feature>
<feature type="binding site" evidence="1">
    <location>
        <position position="47"/>
    </location>
    <ligand>
        <name>GTP</name>
        <dbReference type="ChEBI" id="CHEBI:37565"/>
    </ligand>
</feature>
<feature type="binding site" evidence="1">
    <location>
        <position position="47"/>
    </location>
    <ligand>
        <name>Mg(2+)</name>
        <dbReference type="ChEBI" id="CHEBI:18420"/>
    </ligand>
</feature>
<feature type="binding site" evidence="1">
    <location>
        <position position="48"/>
    </location>
    <ligand>
        <name>GTP</name>
        <dbReference type="ChEBI" id="CHEBI:37565"/>
    </ligand>
</feature>
<feature type="binding site" evidence="1">
    <location>
        <position position="151"/>
    </location>
    <ligand>
        <name>GTP</name>
        <dbReference type="ChEBI" id="CHEBI:37565"/>
    </ligand>
</feature>
<feature type="binding site" evidence="1">
    <location>
        <position position="176"/>
    </location>
    <ligand>
        <name>GTP</name>
        <dbReference type="ChEBI" id="CHEBI:37565"/>
    </ligand>
</feature>
<feature type="binding site" evidence="1">
    <location>
        <position position="182"/>
    </location>
    <ligand>
        <name>GTP</name>
        <dbReference type="ChEBI" id="CHEBI:37565"/>
    </ligand>
</feature>
<feature type="binding site" evidence="1">
    <location>
        <position position="182"/>
    </location>
    <ligand>
        <name>Mg(2+)</name>
        <dbReference type="ChEBI" id="CHEBI:18420"/>
    </ligand>
</feature>
<feature type="binding site" evidence="1">
    <location>
        <position position="204"/>
    </location>
    <ligand>
        <name>GTP</name>
        <dbReference type="ChEBI" id="CHEBI:37565"/>
    </ligand>
</feature>
<feature type="binding site" evidence="1">
    <location>
        <position position="270"/>
    </location>
    <ligand>
        <name>GTP</name>
        <dbReference type="ChEBI" id="CHEBI:37565"/>
    </ligand>
</feature>
<feature type="binding site" evidence="1">
    <location>
        <position position="271"/>
    </location>
    <ligand>
        <name>GTP</name>
        <dbReference type="ChEBI" id="CHEBI:37565"/>
    </ligand>
</feature>
<feature type="binding site" evidence="1">
    <location>
        <position position="273"/>
    </location>
    <ligand>
        <name>GTP</name>
        <dbReference type="ChEBI" id="CHEBI:37565"/>
    </ligand>
</feature>
<feature type="binding site" evidence="1">
    <location>
        <position position="329"/>
    </location>
    <ligand>
        <name>GTP</name>
        <dbReference type="ChEBI" id="CHEBI:37565"/>
    </ligand>
</feature>
<feature type="lipid moiety-binding region" description="N-myristoyl glycine" evidence="2">
    <location>
        <position position="2"/>
    </location>
</feature>
<feature type="lipid moiety-binding region" description="S-palmitoyl cysteine" evidence="2">
    <location>
        <position position="4"/>
    </location>
</feature>
<feature type="sequence conflict" description="In Ref. 1; AAA28060." evidence="4" ref="1">
    <original>FDA</original>
    <variation>LDR</variation>
    <location>
        <begin position="157"/>
        <end position="159"/>
    </location>
</feature>
<reference key="1">
    <citation type="journal article" date="1991" name="Cell Regul.">
        <title>Homologous and unique G protein alpha subunits in the nematode Caenorhabditis elegans.</title>
        <authorList>
            <person name="Lochrie M.A."/>
            <person name="Mendel J.E."/>
            <person name="Sternberg P.W."/>
            <person name="Simon M.I."/>
        </authorList>
    </citation>
    <scope>NUCLEOTIDE SEQUENCE [GENOMIC DNA]</scope>
    <source>
        <strain>Bristol N2</strain>
    </source>
</reference>
<reference key="2">
    <citation type="submission" date="2000-09" db="EMBL/GenBank/DDBJ databases">
        <title>Interaction analysis of the complete G-alpha subfamily of heterotrimeric G proteins from Caenorhabditis elegans.</title>
        <authorList>
            <person name="Cuppen E."/>
            <person name="Jansen G."/>
            <person name="Plasterk R.H.A."/>
        </authorList>
    </citation>
    <scope>NUCLEOTIDE SEQUENCE [MRNA]</scope>
    <source>
        <strain>Bristol N2</strain>
    </source>
</reference>
<reference key="3">
    <citation type="journal article" date="1998" name="Science">
        <title>Genome sequence of the nematode C. elegans: a platform for investigating biology.</title>
        <authorList>
            <consortium name="The C. elegans sequencing consortium"/>
        </authorList>
    </citation>
    <scope>NUCLEOTIDE SEQUENCE [LARGE SCALE GENOMIC DNA]</scope>
    <source>
        <strain>Bristol N2</strain>
    </source>
</reference>
<reference key="4">
    <citation type="journal article" date="1999" name="Nat. Genet.">
        <title>The complete family of genes encoding G proteins of Caenorhabditis elegans.</title>
        <authorList>
            <person name="Jansen G."/>
            <person name="Thijssen K.L."/>
            <person name="Werner P."/>
            <person name="van der Horst M."/>
            <person name="Hazendonk E."/>
            <person name="Plasterk R.H.A."/>
        </authorList>
    </citation>
    <scope>GENE FAMILY</scope>
    <scope>NOMENCLATURE</scope>
</reference>
<comment type="function">
    <text>Guanine nucleotide-binding proteins (G proteins) are involved as modulators or transducers in various transmembrane signaling systems.</text>
</comment>
<comment type="cofactor">
    <cofactor evidence="1">
        <name>Mg(2+)</name>
        <dbReference type="ChEBI" id="CHEBI:18420"/>
    </cofactor>
</comment>
<comment type="subunit">
    <text>G proteins are composed of 3 units; alpha, beta and gamma. The alpha chain contains the guanine nucleotide binding site.</text>
</comment>
<comment type="similarity">
    <text evidence="4">Belongs to the G-alpha family.</text>
</comment>
<proteinExistence type="evidence at transcript level"/>
<name>GPA1_CAEEL</name>
<evidence type="ECO:0000250" key="1">
    <source>
        <dbReference type="UniProtKB" id="P18064"/>
    </source>
</evidence>
<evidence type="ECO:0000255" key="2"/>
<evidence type="ECO:0000255" key="3">
    <source>
        <dbReference type="PROSITE-ProRule" id="PRU01230"/>
    </source>
</evidence>
<evidence type="ECO:0000305" key="4"/>
<accession>P28051</accession>
<accession>Q22567</accession>
<protein>
    <recommendedName>
        <fullName>Guanine nucleotide-binding protein alpha-1 subunit</fullName>
    </recommendedName>
</protein>
<sequence length="357" mass="40660">MGNCESRELVAQAKQNKIINTELDKAKKTDENIIKLLLLGAGESGKSTVLKQMKIIHNSGFSQEEISNKRNVVCANTVQAMGALLDGMKQLQFDFSTRVCNAHEKLIRETLNDKAEYGPFSDAMFNALTELWADKGVQCAYDKREFFYLHDSAKYFFDAIARVHTPNYVPTENDILHTRVPTMGVIEVNFTIKGKFFRVFDVGGQRSQRKKWIHCFDDAKAMIYVASLSEYDQVLLEDNTTNRMHESIQLFKQVINNKYFVNTSVILFLNKIDLFEEKIVTKKRSLGIAFESFSGPSQDLNAAVAFVEKKYRSMAENKEKNIYCHHTCATDTQQVQYVLDAVLDTILSTKLKGCGLY</sequence>
<gene>
    <name type="primary">gpa-1</name>
    <name type="ORF">T19C4.6</name>
</gene>
<keyword id="KW-0342">GTP-binding</keyword>
<keyword id="KW-0378">Hydrolase</keyword>
<keyword id="KW-0449">Lipoprotein</keyword>
<keyword id="KW-0460">Magnesium</keyword>
<keyword id="KW-0479">Metal-binding</keyword>
<keyword id="KW-0519">Myristate</keyword>
<keyword id="KW-0547">Nucleotide-binding</keyword>
<keyword id="KW-0564">Palmitate</keyword>
<keyword id="KW-1185">Reference proteome</keyword>
<keyword id="KW-0807">Transducer</keyword>